<reference key="1">
    <citation type="journal article" date="2009" name="Genome Biol.">
        <title>Genomic and genetic analyses of diversity and plant interactions of Pseudomonas fluorescens.</title>
        <authorList>
            <person name="Silby M.W."/>
            <person name="Cerdeno-Tarraga A.M."/>
            <person name="Vernikos G.S."/>
            <person name="Giddens S.R."/>
            <person name="Jackson R.W."/>
            <person name="Preston G.M."/>
            <person name="Zhang X.-X."/>
            <person name="Moon C.D."/>
            <person name="Gehrig S.M."/>
            <person name="Godfrey S.A.C."/>
            <person name="Knight C.G."/>
            <person name="Malone J.G."/>
            <person name="Robinson Z."/>
            <person name="Spiers A.J."/>
            <person name="Harris S."/>
            <person name="Challis G.L."/>
            <person name="Yaxley A.M."/>
            <person name="Harris D."/>
            <person name="Seeger K."/>
            <person name="Murphy L."/>
            <person name="Rutter S."/>
            <person name="Squares R."/>
            <person name="Quail M.A."/>
            <person name="Saunders E."/>
            <person name="Mavromatis K."/>
            <person name="Brettin T.S."/>
            <person name="Bentley S.D."/>
            <person name="Hothersall J."/>
            <person name="Stephens E."/>
            <person name="Thomas C.M."/>
            <person name="Parkhill J."/>
            <person name="Levy S.B."/>
            <person name="Rainey P.B."/>
            <person name="Thomson N.R."/>
        </authorList>
    </citation>
    <scope>NUCLEOTIDE SEQUENCE [LARGE SCALE GENOMIC DNA]</scope>
    <source>
        <strain>SBW25</strain>
    </source>
</reference>
<accession>C3K256</accession>
<proteinExistence type="inferred from homology"/>
<gene>
    <name evidence="1" type="primary">rpsO</name>
    <name type="ordered locus">PFLU_5250</name>
</gene>
<comment type="function">
    <text evidence="1">One of the primary rRNA binding proteins, it binds directly to 16S rRNA where it helps nucleate assembly of the platform of the 30S subunit by binding and bridging several RNA helices of the 16S rRNA.</text>
</comment>
<comment type="function">
    <text evidence="1">Forms an intersubunit bridge (bridge B4) with the 23S rRNA of the 50S subunit in the ribosome.</text>
</comment>
<comment type="subunit">
    <text evidence="1">Part of the 30S ribosomal subunit. Forms a bridge to the 50S subunit in the 70S ribosome, contacting the 23S rRNA.</text>
</comment>
<comment type="similarity">
    <text evidence="1">Belongs to the universal ribosomal protein uS15 family.</text>
</comment>
<sequence length="89" mass="10119">MALDVQEKAQIVADYQQAVGDTGSPEVQVALLTHNINKLQGHFKANGKDHHSRRGLIRMVNQRRKLLDYLKGKDLGRYQTLIGRLGLRR</sequence>
<protein>
    <recommendedName>
        <fullName evidence="1">Small ribosomal subunit protein uS15</fullName>
    </recommendedName>
    <alternativeName>
        <fullName evidence="2">30S ribosomal protein S15</fullName>
    </alternativeName>
</protein>
<organism>
    <name type="scientific">Pseudomonas fluorescens (strain SBW25)</name>
    <dbReference type="NCBI Taxonomy" id="216595"/>
    <lineage>
        <taxon>Bacteria</taxon>
        <taxon>Pseudomonadati</taxon>
        <taxon>Pseudomonadota</taxon>
        <taxon>Gammaproteobacteria</taxon>
        <taxon>Pseudomonadales</taxon>
        <taxon>Pseudomonadaceae</taxon>
        <taxon>Pseudomonas</taxon>
    </lineage>
</organism>
<name>RS15_PSEFS</name>
<feature type="chain" id="PRO_1000214766" description="Small ribosomal subunit protein uS15">
    <location>
        <begin position="1"/>
        <end position="89"/>
    </location>
</feature>
<keyword id="KW-0687">Ribonucleoprotein</keyword>
<keyword id="KW-0689">Ribosomal protein</keyword>
<keyword id="KW-0694">RNA-binding</keyword>
<keyword id="KW-0699">rRNA-binding</keyword>
<evidence type="ECO:0000255" key="1">
    <source>
        <dbReference type="HAMAP-Rule" id="MF_01343"/>
    </source>
</evidence>
<evidence type="ECO:0000305" key="2"/>
<dbReference type="EMBL" id="AM181176">
    <property type="protein sequence ID" value="CAY52347.1"/>
    <property type="molecule type" value="Genomic_DNA"/>
</dbReference>
<dbReference type="RefSeq" id="WP_003177875.1">
    <property type="nucleotide sequence ID" value="NC_012660.1"/>
</dbReference>
<dbReference type="SMR" id="C3K256"/>
<dbReference type="STRING" id="294.SRM1_00829"/>
<dbReference type="GeneID" id="97919725"/>
<dbReference type="eggNOG" id="COG0184">
    <property type="taxonomic scope" value="Bacteria"/>
</dbReference>
<dbReference type="HOGENOM" id="CLU_148518_0_0_6"/>
<dbReference type="OrthoDB" id="9799262at2"/>
<dbReference type="GO" id="GO:0022627">
    <property type="term" value="C:cytosolic small ribosomal subunit"/>
    <property type="evidence" value="ECO:0007669"/>
    <property type="project" value="TreeGrafter"/>
</dbReference>
<dbReference type="GO" id="GO:0019843">
    <property type="term" value="F:rRNA binding"/>
    <property type="evidence" value="ECO:0007669"/>
    <property type="project" value="UniProtKB-UniRule"/>
</dbReference>
<dbReference type="GO" id="GO:0003735">
    <property type="term" value="F:structural constituent of ribosome"/>
    <property type="evidence" value="ECO:0007669"/>
    <property type="project" value="InterPro"/>
</dbReference>
<dbReference type="GO" id="GO:0006412">
    <property type="term" value="P:translation"/>
    <property type="evidence" value="ECO:0007669"/>
    <property type="project" value="UniProtKB-UniRule"/>
</dbReference>
<dbReference type="CDD" id="cd00353">
    <property type="entry name" value="Ribosomal_S15p_S13e"/>
    <property type="match status" value="1"/>
</dbReference>
<dbReference type="FunFam" id="1.10.287.10:FF:000002">
    <property type="entry name" value="30S ribosomal protein S15"/>
    <property type="match status" value="1"/>
</dbReference>
<dbReference type="Gene3D" id="6.10.250.3130">
    <property type="match status" value="1"/>
</dbReference>
<dbReference type="Gene3D" id="1.10.287.10">
    <property type="entry name" value="S15/NS1, RNA-binding"/>
    <property type="match status" value="1"/>
</dbReference>
<dbReference type="HAMAP" id="MF_01343_B">
    <property type="entry name" value="Ribosomal_uS15_B"/>
    <property type="match status" value="1"/>
</dbReference>
<dbReference type="InterPro" id="IPR000589">
    <property type="entry name" value="Ribosomal_uS15"/>
</dbReference>
<dbReference type="InterPro" id="IPR005290">
    <property type="entry name" value="Ribosomal_uS15_bac-type"/>
</dbReference>
<dbReference type="InterPro" id="IPR009068">
    <property type="entry name" value="uS15_NS1_RNA-bd_sf"/>
</dbReference>
<dbReference type="NCBIfam" id="TIGR00952">
    <property type="entry name" value="S15_bact"/>
    <property type="match status" value="1"/>
</dbReference>
<dbReference type="PANTHER" id="PTHR23321">
    <property type="entry name" value="RIBOSOMAL PROTEIN S15, BACTERIAL AND ORGANELLAR"/>
    <property type="match status" value="1"/>
</dbReference>
<dbReference type="PANTHER" id="PTHR23321:SF26">
    <property type="entry name" value="SMALL RIBOSOMAL SUBUNIT PROTEIN US15M"/>
    <property type="match status" value="1"/>
</dbReference>
<dbReference type="Pfam" id="PF00312">
    <property type="entry name" value="Ribosomal_S15"/>
    <property type="match status" value="1"/>
</dbReference>
<dbReference type="SMART" id="SM01387">
    <property type="entry name" value="Ribosomal_S15"/>
    <property type="match status" value="1"/>
</dbReference>
<dbReference type="SUPFAM" id="SSF47060">
    <property type="entry name" value="S15/NS1 RNA-binding domain"/>
    <property type="match status" value="1"/>
</dbReference>
<dbReference type="PROSITE" id="PS00362">
    <property type="entry name" value="RIBOSOMAL_S15"/>
    <property type="match status" value="1"/>
</dbReference>